<accession>Q6P6J4</accession>
<accession>Q8C591</accession>
<protein>
    <recommendedName>
        <fullName>DNA oxidative demethylase ALKBH2</fullName>
        <ecNumber evidence="4 5 6">1.14.11.33</ecNumber>
    </recommendedName>
    <alternativeName>
        <fullName>Alkylated DNA repair protein alkB homolog 2</fullName>
    </alternativeName>
    <alternativeName>
        <fullName>Alpha-ketoglutarate-dependent dioxygenase alkB homolog 2</fullName>
    </alternativeName>
</protein>
<feature type="chain" id="PRO_0000239276" description="DNA oxidative demethylase ALKBH2">
    <location>
        <begin position="1"/>
        <end position="239"/>
    </location>
</feature>
<feature type="domain" description="Fe2OG dioxygenase" evidence="2">
    <location>
        <begin position="130"/>
        <end position="235"/>
    </location>
</feature>
<feature type="region of interest" description="Disordered" evidence="3">
    <location>
        <begin position="11"/>
        <end position="32"/>
    </location>
</feature>
<feature type="short sequence motif" description="PCNA-binding" evidence="1">
    <location>
        <begin position="3"/>
        <end position="7"/>
    </location>
</feature>
<feature type="binding site" evidence="1">
    <location>
        <begin position="80"/>
        <end position="82"/>
    </location>
    <ligand>
        <name>substrate</name>
    </ligand>
</feature>
<feature type="binding site" evidence="1">
    <location>
        <begin position="100"/>
        <end position="102"/>
    </location>
    <ligand>
        <name>substrate</name>
    </ligand>
</feature>
<feature type="binding site" evidence="1">
    <location>
        <position position="137"/>
    </location>
    <ligand>
        <name>2-oxoglutarate</name>
        <dbReference type="ChEBI" id="CHEBI:16810"/>
    </ligand>
</feature>
<feature type="binding site" evidence="1">
    <location>
        <position position="139"/>
    </location>
    <ligand>
        <name>2-oxoglutarate</name>
        <dbReference type="ChEBI" id="CHEBI:16810"/>
    </ligand>
</feature>
<feature type="binding site" evidence="1">
    <location>
        <position position="149"/>
    </location>
    <ligand>
        <name>2-oxoglutarate</name>
        <dbReference type="ChEBI" id="CHEBI:16810"/>
    </ligand>
</feature>
<feature type="binding site" evidence="2">
    <location>
        <position position="149"/>
    </location>
    <ligand>
        <name>Fe cation</name>
        <dbReference type="ChEBI" id="CHEBI:24875"/>
        <note>catalytic</note>
    </ligand>
</feature>
<feature type="binding site" evidence="2">
    <location>
        <position position="151"/>
    </location>
    <ligand>
        <name>Fe cation</name>
        <dbReference type="ChEBI" id="CHEBI:24875"/>
        <note>catalytic</note>
    </ligand>
</feature>
<feature type="binding site" evidence="1">
    <location>
        <position position="152"/>
    </location>
    <ligand>
        <name>substrate</name>
    </ligand>
</feature>
<feature type="binding site" evidence="1">
    <location>
        <position position="214"/>
    </location>
    <ligand>
        <name>2-oxoglutarate</name>
        <dbReference type="ChEBI" id="CHEBI:16810"/>
    </ligand>
</feature>
<feature type="binding site" evidence="2">
    <location>
        <position position="214"/>
    </location>
    <ligand>
        <name>Fe cation</name>
        <dbReference type="ChEBI" id="CHEBI:24875"/>
        <note>catalytic</note>
    </ligand>
</feature>
<feature type="binding site" evidence="1">
    <location>
        <position position="226"/>
    </location>
    <ligand>
        <name>2-oxoglutarate</name>
        <dbReference type="ChEBI" id="CHEBI:16810"/>
    </ligand>
</feature>
<feature type="binding site" evidence="1">
    <location>
        <position position="230"/>
    </location>
    <ligand>
        <name>2-oxoglutarate</name>
        <dbReference type="ChEBI" id="CHEBI:16810"/>
    </ligand>
</feature>
<feature type="binding site" evidence="1">
    <location>
        <position position="232"/>
    </location>
    <ligand>
        <name>2-oxoglutarate</name>
        <dbReference type="ChEBI" id="CHEBI:16810"/>
    </ligand>
</feature>
<feature type="mutagenesis site" description="Loss of activity." evidence="4">
    <original>D</original>
    <variation>A</variation>
    <location>
        <position position="151"/>
    </location>
</feature>
<feature type="mutagenesis site" description="Reduces activity." evidence="4">
    <original>H</original>
    <variation>A</variation>
    <location>
        <position position="214"/>
    </location>
</feature>
<feature type="sequence conflict" description="In Ref. 1; BAC37576." evidence="7" ref="1">
    <original>H</original>
    <variation>Q</variation>
    <location>
        <position position="149"/>
    </location>
</feature>
<evidence type="ECO:0000250" key="1">
    <source>
        <dbReference type="UniProtKB" id="Q6NS38"/>
    </source>
</evidence>
<evidence type="ECO:0000255" key="2">
    <source>
        <dbReference type="PROSITE-ProRule" id="PRU00805"/>
    </source>
</evidence>
<evidence type="ECO:0000256" key="3">
    <source>
        <dbReference type="SAM" id="MobiDB-lite"/>
    </source>
</evidence>
<evidence type="ECO:0000269" key="4">
    <source>
    </source>
</evidence>
<evidence type="ECO:0000269" key="5">
    <source>
    </source>
</evidence>
<evidence type="ECO:0000269" key="6">
    <source>
    </source>
</evidence>
<evidence type="ECO:0000305" key="7"/>
<evidence type="ECO:0000305" key="8">
    <source>
    </source>
</evidence>
<evidence type="ECO:0000305" key="9">
    <source>
    </source>
</evidence>
<evidence type="ECO:0000305" key="10">
    <source>
    </source>
</evidence>
<gene>
    <name type="primary">Alkbh2</name>
    <name type="synonym">Abh2</name>
</gene>
<dbReference type="EC" id="1.14.11.33" evidence="4 5 6"/>
<dbReference type="EMBL" id="AK079195">
    <property type="protein sequence ID" value="BAC37576.1"/>
    <property type="molecule type" value="mRNA"/>
</dbReference>
<dbReference type="EMBL" id="BC062188">
    <property type="protein sequence ID" value="AAH62188.1"/>
    <property type="molecule type" value="mRNA"/>
</dbReference>
<dbReference type="CCDS" id="CCDS19559.1"/>
<dbReference type="RefSeq" id="NP_001346869.1">
    <property type="nucleotide sequence ID" value="NM_001359940.2"/>
</dbReference>
<dbReference type="RefSeq" id="NP_001346870.1">
    <property type="nucleotide sequence ID" value="NM_001359941.2"/>
</dbReference>
<dbReference type="RefSeq" id="NP_001411580.1">
    <property type="nucleotide sequence ID" value="NM_001424651.1"/>
</dbReference>
<dbReference type="RefSeq" id="NP_001411581.1">
    <property type="nucleotide sequence ID" value="NM_001424652.1"/>
</dbReference>
<dbReference type="RefSeq" id="NP_778181.2">
    <property type="nucleotide sequence ID" value="NM_175016.4"/>
</dbReference>
<dbReference type="RefSeq" id="XP_006530352.1">
    <property type="nucleotide sequence ID" value="XM_006530289.3"/>
</dbReference>
<dbReference type="RefSeq" id="XP_006530353.1">
    <property type="nucleotide sequence ID" value="XM_006530290.3"/>
</dbReference>
<dbReference type="RefSeq" id="XP_006530354.1">
    <property type="nucleotide sequence ID" value="XM_006530291.2"/>
</dbReference>
<dbReference type="RefSeq" id="XP_006530355.1">
    <property type="nucleotide sequence ID" value="XM_006530292.3"/>
</dbReference>
<dbReference type="SMR" id="Q6P6J4"/>
<dbReference type="FunCoup" id="Q6P6J4">
    <property type="interactions" value="1635"/>
</dbReference>
<dbReference type="STRING" id="10090.ENSMUSP00000056043"/>
<dbReference type="GlyGen" id="Q6P6J4">
    <property type="glycosylation" value="1 site"/>
</dbReference>
<dbReference type="PhosphoSitePlus" id="Q6P6J4"/>
<dbReference type="PaxDb" id="10090-ENSMUSP00000056043"/>
<dbReference type="PeptideAtlas" id="Q6P6J4"/>
<dbReference type="ProteomicsDB" id="296096"/>
<dbReference type="Antibodypedia" id="4403">
    <property type="antibodies" value="143 antibodies from 30 providers"/>
</dbReference>
<dbReference type="DNASU" id="231642"/>
<dbReference type="Ensembl" id="ENSMUST00000053657.13">
    <property type="protein sequence ID" value="ENSMUSP00000056043.7"/>
    <property type="gene ID" value="ENSMUSG00000044339.13"/>
</dbReference>
<dbReference type="Ensembl" id="ENSMUST00000112279.2">
    <property type="protein sequence ID" value="ENSMUSP00000107898.2"/>
    <property type="gene ID" value="ENSMUSG00000044339.13"/>
</dbReference>
<dbReference type="GeneID" id="231642"/>
<dbReference type="KEGG" id="mmu:231642"/>
<dbReference type="UCSC" id="uc008yzd.1">
    <property type="organism name" value="mouse"/>
</dbReference>
<dbReference type="AGR" id="MGI:2141032"/>
<dbReference type="CTD" id="121642"/>
<dbReference type="MGI" id="MGI:2141032">
    <property type="gene designation" value="Alkbh2"/>
</dbReference>
<dbReference type="VEuPathDB" id="HostDB:ENSMUSG00000044339"/>
<dbReference type="eggNOG" id="ENOG502QTDK">
    <property type="taxonomic scope" value="Eukaryota"/>
</dbReference>
<dbReference type="GeneTree" id="ENSGT00940000159009"/>
<dbReference type="HOGENOM" id="CLU_048788_5_0_1"/>
<dbReference type="InParanoid" id="Q6P6J4"/>
<dbReference type="OMA" id="TQHHWQH"/>
<dbReference type="OrthoDB" id="445341at2759"/>
<dbReference type="PhylomeDB" id="Q6P6J4"/>
<dbReference type="TreeFam" id="TF331732"/>
<dbReference type="BioGRID-ORCS" id="231642">
    <property type="hits" value="2 hits in 115 CRISPR screens"/>
</dbReference>
<dbReference type="PRO" id="PR:Q6P6J4"/>
<dbReference type="Proteomes" id="UP000000589">
    <property type="component" value="Chromosome 5"/>
</dbReference>
<dbReference type="RNAct" id="Q6P6J4">
    <property type="molecule type" value="protein"/>
</dbReference>
<dbReference type="Bgee" id="ENSMUSG00000044339">
    <property type="expression patterns" value="Expressed in cleaving embryo and 123 other cell types or tissues"/>
</dbReference>
<dbReference type="ExpressionAtlas" id="Q6P6J4">
    <property type="expression patterns" value="baseline and differential"/>
</dbReference>
<dbReference type="GO" id="GO:0005730">
    <property type="term" value="C:nucleolus"/>
    <property type="evidence" value="ECO:0007669"/>
    <property type="project" value="UniProtKB-SubCell"/>
</dbReference>
<dbReference type="GO" id="GO:0005654">
    <property type="term" value="C:nucleoplasm"/>
    <property type="evidence" value="ECO:0007669"/>
    <property type="project" value="UniProtKB-SubCell"/>
</dbReference>
<dbReference type="GO" id="GO:0016706">
    <property type="term" value="F:2-oxoglutarate-dependent dioxygenase activity"/>
    <property type="evidence" value="ECO:0000314"/>
    <property type="project" value="MGI"/>
</dbReference>
<dbReference type="GO" id="GO:0035516">
    <property type="term" value="F:broad specificity oxidative DNA demethylase activity"/>
    <property type="evidence" value="ECO:0000314"/>
    <property type="project" value="UniProtKB"/>
</dbReference>
<dbReference type="GO" id="GO:0051747">
    <property type="term" value="F:cytosine C-5 DNA demethylase activity"/>
    <property type="evidence" value="ECO:0000314"/>
    <property type="project" value="MGI"/>
</dbReference>
<dbReference type="GO" id="GO:0008198">
    <property type="term" value="F:ferrous iron binding"/>
    <property type="evidence" value="ECO:0000250"/>
    <property type="project" value="UniProtKB"/>
</dbReference>
<dbReference type="GO" id="GO:0000182">
    <property type="term" value="F:rDNA binding"/>
    <property type="evidence" value="ECO:0007669"/>
    <property type="project" value="Ensembl"/>
</dbReference>
<dbReference type="GO" id="GO:0006307">
    <property type="term" value="P:DNA alkylation repair"/>
    <property type="evidence" value="ECO:0000315"/>
    <property type="project" value="UniProtKB"/>
</dbReference>
<dbReference type="FunFam" id="2.60.120.590:FF:000004">
    <property type="entry name" value="DNA oxidative demethylase ALKBH2"/>
    <property type="match status" value="1"/>
</dbReference>
<dbReference type="Gene3D" id="2.60.120.590">
    <property type="entry name" value="Alpha-ketoglutarate-dependent dioxygenase AlkB-like"/>
    <property type="match status" value="1"/>
</dbReference>
<dbReference type="InterPro" id="IPR027450">
    <property type="entry name" value="AlkB-like"/>
</dbReference>
<dbReference type="InterPro" id="IPR037151">
    <property type="entry name" value="AlkB-like_sf"/>
</dbReference>
<dbReference type="InterPro" id="IPR032852">
    <property type="entry name" value="ALKBH2"/>
</dbReference>
<dbReference type="InterPro" id="IPR005123">
    <property type="entry name" value="Oxoglu/Fe-dep_dioxygenase_dom"/>
</dbReference>
<dbReference type="PANTHER" id="PTHR31573">
    <property type="entry name" value="ALPHA-KETOGLUTARATE-DEPENDENT DIOXYGENASE ALKB HOMOLOG 2"/>
    <property type="match status" value="1"/>
</dbReference>
<dbReference type="PANTHER" id="PTHR31573:SF1">
    <property type="entry name" value="DNA OXIDATIVE DEMETHYLASE ALKBH2"/>
    <property type="match status" value="1"/>
</dbReference>
<dbReference type="Pfam" id="PF13532">
    <property type="entry name" value="2OG-FeII_Oxy_2"/>
    <property type="match status" value="1"/>
</dbReference>
<dbReference type="SUPFAM" id="SSF51197">
    <property type="entry name" value="Clavaminate synthase-like"/>
    <property type="match status" value="1"/>
</dbReference>
<dbReference type="PROSITE" id="PS51471">
    <property type="entry name" value="FE2OG_OXY"/>
    <property type="match status" value="1"/>
</dbReference>
<organism>
    <name type="scientific">Mus musculus</name>
    <name type="common">Mouse</name>
    <dbReference type="NCBI Taxonomy" id="10090"/>
    <lineage>
        <taxon>Eukaryota</taxon>
        <taxon>Metazoa</taxon>
        <taxon>Chordata</taxon>
        <taxon>Craniata</taxon>
        <taxon>Vertebrata</taxon>
        <taxon>Euteleostomi</taxon>
        <taxon>Mammalia</taxon>
        <taxon>Eutheria</taxon>
        <taxon>Euarchontoglires</taxon>
        <taxon>Glires</taxon>
        <taxon>Rodentia</taxon>
        <taxon>Myomorpha</taxon>
        <taxon>Muroidea</taxon>
        <taxon>Muridae</taxon>
        <taxon>Murinae</taxon>
        <taxon>Mus</taxon>
        <taxon>Mus</taxon>
    </lineage>
</organism>
<name>ALKB2_MOUSE</name>
<comment type="function">
    <text evidence="1 4 5 6">Dioxygenase that repairs alkylated nucleic acid bases by direct reversal oxidative dealkylation. Can process both double-stranded (ds) and single-stranded (ss) DNA substrates, with a strong preference for dsDNA (PubMed:16174769, PubMed:16642038, PubMed:18519673). Uses molecular oxygen, 2-oxoglutarate and iron as cofactors to oxidize the alkyl groups that are subsequently released as aldehydes, regenerating the undamaged bases. Probes the base pair stability, locates a weakened base pair and flips the damaged base to accommodate the lesion in its active site for efficient catalysis (By similarity) (PubMed:16174769, PubMed:16642038, PubMed:18519673). Repairs monoalkylated bases, specifically N1-methyladenine and N3-methylcytosine, as well as higher order alkyl adducts such as bases modified with exocyclic bridged adducts known as etheno adducts including 1,N6-ethenoadenine, 3,N4-ethenocytosine and 1,N2-ethenoguanine (By similarity). Acts as a gatekeeper of genomic integrity under alkylation stress. Efficiently repairs alkylated lesions in ribosomal DNA (rDNA). These lesions can cause ss- and dsDNA strand breaks that severely impair rDNA transcription (By similarity). In a response mechanism to DNA damage, associates with PCNA at replication forks to repair alkylated adducts prior to replication (By similarity).</text>
</comment>
<comment type="catalytic activity">
    <reaction evidence="4 5 6">
        <text>a methylated nucleobase within DNA + 2-oxoglutarate + O2 = a nucleobase within DNA + formaldehyde + succinate + CO2</text>
        <dbReference type="Rhea" id="RHEA:30299"/>
        <dbReference type="Rhea" id="RHEA-COMP:12192"/>
        <dbReference type="Rhea" id="RHEA-COMP:12193"/>
        <dbReference type="ChEBI" id="CHEBI:15379"/>
        <dbReference type="ChEBI" id="CHEBI:16526"/>
        <dbReference type="ChEBI" id="CHEBI:16810"/>
        <dbReference type="ChEBI" id="CHEBI:16842"/>
        <dbReference type="ChEBI" id="CHEBI:30031"/>
        <dbReference type="ChEBI" id="CHEBI:32875"/>
        <dbReference type="ChEBI" id="CHEBI:64428"/>
        <dbReference type="EC" id="1.14.11.33"/>
    </reaction>
    <physiologicalReaction direction="left-to-right" evidence="8 9 10">
        <dbReference type="Rhea" id="RHEA:30300"/>
    </physiologicalReaction>
</comment>
<comment type="catalytic activity">
    <reaction evidence="5">
        <text>an N(1)-methyl-2'-deoxyadenosine in double-stranded DNA + 2-oxoglutarate + O2 = a 2'-deoxyadenosine in double-stranded DNA + formaldehyde + succinate + CO2 + H(+)</text>
        <dbReference type="Rhea" id="RHEA:70443"/>
        <dbReference type="Rhea" id="RHEA-COMP:14236"/>
        <dbReference type="Rhea" id="RHEA-COMP:17897"/>
        <dbReference type="ChEBI" id="CHEBI:15378"/>
        <dbReference type="ChEBI" id="CHEBI:15379"/>
        <dbReference type="ChEBI" id="CHEBI:16526"/>
        <dbReference type="ChEBI" id="CHEBI:16810"/>
        <dbReference type="ChEBI" id="CHEBI:16842"/>
        <dbReference type="ChEBI" id="CHEBI:30031"/>
        <dbReference type="ChEBI" id="CHEBI:90615"/>
        <dbReference type="ChEBI" id="CHEBI:139096"/>
    </reaction>
    <physiologicalReaction direction="left-to-right" evidence="9">
        <dbReference type="Rhea" id="RHEA:70444"/>
    </physiologicalReaction>
</comment>
<comment type="catalytic activity">
    <reaction evidence="4">
        <text>an N(1)-methyl-2'-deoxyadenosine in single-stranded DNA + 2-oxoglutarate + O2 = a 2'-deoxyadenosine in single-stranded DNA + formaldehyde + succinate + CO2 + H(+)</text>
        <dbReference type="Rhea" id="RHEA:70447"/>
        <dbReference type="Rhea" id="RHEA-COMP:17895"/>
        <dbReference type="Rhea" id="RHEA-COMP:17896"/>
        <dbReference type="ChEBI" id="CHEBI:15378"/>
        <dbReference type="ChEBI" id="CHEBI:15379"/>
        <dbReference type="ChEBI" id="CHEBI:16526"/>
        <dbReference type="ChEBI" id="CHEBI:16810"/>
        <dbReference type="ChEBI" id="CHEBI:16842"/>
        <dbReference type="ChEBI" id="CHEBI:30031"/>
        <dbReference type="ChEBI" id="CHEBI:90615"/>
        <dbReference type="ChEBI" id="CHEBI:139096"/>
    </reaction>
    <physiologicalReaction direction="left-to-right" evidence="8">
        <dbReference type="Rhea" id="RHEA:70448"/>
    </physiologicalReaction>
</comment>
<comment type="catalytic activity">
    <reaction evidence="5 6">
        <text>an N(3)-methyl-2'-deoxycytidine in double-stranded DNA + 2-oxoglutarate + O2 = a 2'-deoxycytidine in double-stranded DNA + formaldehyde + succinate + CO2 + H(+)</text>
        <dbReference type="Rhea" id="RHEA:70439"/>
        <dbReference type="Rhea" id="RHEA-COMP:14237"/>
        <dbReference type="Rhea" id="RHEA-COMP:17070"/>
        <dbReference type="ChEBI" id="CHEBI:15378"/>
        <dbReference type="ChEBI" id="CHEBI:15379"/>
        <dbReference type="ChEBI" id="CHEBI:16526"/>
        <dbReference type="ChEBI" id="CHEBI:16810"/>
        <dbReference type="ChEBI" id="CHEBI:16842"/>
        <dbReference type="ChEBI" id="CHEBI:30031"/>
        <dbReference type="ChEBI" id="CHEBI:85452"/>
        <dbReference type="ChEBI" id="CHEBI:139075"/>
    </reaction>
    <physiologicalReaction direction="left-to-right" evidence="9 10">
        <dbReference type="Rhea" id="RHEA:70440"/>
    </physiologicalReaction>
</comment>
<comment type="catalytic activity">
    <reaction evidence="4">
        <text>an N(3)-methyl-2'-deoxycytidine in single-stranded DNA + 2-oxoglutarate + O2 = a 2'-deoxycytidine in single-stranded DNA + formaldehyde + succinate + CO2 + H(+)</text>
        <dbReference type="Rhea" id="RHEA:70435"/>
        <dbReference type="Rhea" id="RHEA-COMP:12846"/>
        <dbReference type="Rhea" id="RHEA-COMP:17894"/>
        <dbReference type="ChEBI" id="CHEBI:15378"/>
        <dbReference type="ChEBI" id="CHEBI:15379"/>
        <dbReference type="ChEBI" id="CHEBI:16526"/>
        <dbReference type="ChEBI" id="CHEBI:16810"/>
        <dbReference type="ChEBI" id="CHEBI:16842"/>
        <dbReference type="ChEBI" id="CHEBI:30031"/>
        <dbReference type="ChEBI" id="CHEBI:85452"/>
        <dbReference type="ChEBI" id="CHEBI:139075"/>
    </reaction>
    <physiologicalReaction direction="left-to-right" evidence="8">
        <dbReference type="Rhea" id="RHEA:70436"/>
    </physiologicalReaction>
</comment>
<comment type="catalytic activity">
    <reaction evidence="6">
        <text>a 1,N(6)-etheno-2'-deoxyadenosine in double-stranded DNA + 2-oxoglutarate + O2 + H2O = a 2'-deoxyadenosine in double-stranded DNA + glyoxal + succinate + CO2</text>
        <dbReference type="Rhea" id="RHEA:70463"/>
        <dbReference type="Rhea" id="RHEA-COMP:17897"/>
        <dbReference type="Rhea" id="RHEA-COMP:17903"/>
        <dbReference type="ChEBI" id="CHEBI:15377"/>
        <dbReference type="ChEBI" id="CHEBI:15379"/>
        <dbReference type="ChEBI" id="CHEBI:16526"/>
        <dbReference type="ChEBI" id="CHEBI:16810"/>
        <dbReference type="ChEBI" id="CHEBI:30031"/>
        <dbReference type="ChEBI" id="CHEBI:34779"/>
        <dbReference type="ChEBI" id="CHEBI:90615"/>
        <dbReference type="ChEBI" id="CHEBI:189583"/>
    </reaction>
    <physiologicalReaction direction="left-to-right" evidence="10">
        <dbReference type="Rhea" id="RHEA:70464"/>
    </physiologicalReaction>
</comment>
<comment type="catalytic activity">
    <reaction evidence="1">
        <text>a 1,N(6)-etheno-2'-deoxyadenosine in single-stranded DNA + 2-oxoglutarate + O2 + H2O = a 2'-deoxyadenosine in single-stranded DNA + glyoxal + succinate + CO2</text>
        <dbReference type="Rhea" id="RHEA:70459"/>
        <dbReference type="Rhea" id="RHEA-COMP:17896"/>
        <dbReference type="Rhea" id="RHEA-COMP:17904"/>
        <dbReference type="ChEBI" id="CHEBI:15377"/>
        <dbReference type="ChEBI" id="CHEBI:15379"/>
        <dbReference type="ChEBI" id="CHEBI:16526"/>
        <dbReference type="ChEBI" id="CHEBI:16810"/>
        <dbReference type="ChEBI" id="CHEBI:30031"/>
        <dbReference type="ChEBI" id="CHEBI:34779"/>
        <dbReference type="ChEBI" id="CHEBI:90615"/>
        <dbReference type="ChEBI" id="CHEBI:189583"/>
    </reaction>
    <physiologicalReaction direction="left-to-right" evidence="1">
        <dbReference type="Rhea" id="RHEA:70460"/>
    </physiologicalReaction>
</comment>
<comment type="catalytic activity">
    <reaction evidence="1">
        <text>a 3,N(4)-etheno-2'-deoxycytidine in double-stranded DNA + 2-oxoglutarate + O2 + H2O = a 2'-deoxycytidine in double-stranded DNA + glyoxal + succinate + CO2</text>
        <dbReference type="Rhea" id="RHEA:70467"/>
        <dbReference type="Rhea" id="RHEA-COMP:17070"/>
        <dbReference type="Rhea" id="RHEA-COMP:17905"/>
        <dbReference type="ChEBI" id="CHEBI:15377"/>
        <dbReference type="ChEBI" id="CHEBI:15379"/>
        <dbReference type="ChEBI" id="CHEBI:16526"/>
        <dbReference type="ChEBI" id="CHEBI:16810"/>
        <dbReference type="ChEBI" id="CHEBI:30031"/>
        <dbReference type="ChEBI" id="CHEBI:34779"/>
        <dbReference type="ChEBI" id="CHEBI:85452"/>
        <dbReference type="ChEBI" id="CHEBI:189585"/>
    </reaction>
    <physiologicalReaction direction="left-to-right" evidence="1">
        <dbReference type="Rhea" id="RHEA:70468"/>
    </physiologicalReaction>
</comment>
<comment type="catalytic activity">
    <reaction evidence="1">
        <text>a 3,N(4)-etheno-2'-deoxycytidine in single-stranded DNA + 2-oxoglutarate + O2 + H2O = a 2'-deoxycytidine in single-stranded DNA + glyoxal + succinate + CO2</text>
        <dbReference type="Rhea" id="RHEA:70471"/>
        <dbReference type="Rhea" id="RHEA-COMP:12846"/>
        <dbReference type="Rhea" id="RHEA-COMP:17906"/>
        <dbReference type="ChEBI" id="CHEBI:15377"/>
        <dbReference type="ChEBI" id="CHEBI:15379"/>
        <dbReference type="ChEBI" id="CHEBI:16526"/>
        <dbReference type="ChEBI" id="CHEBI:16810"/>
        <dbReference type="ChEBI" id="CHEBI:30031"/>
        <dbReference type="ChEBI" id="CHEBI:34779"/>
        <dbReference type="ChEBI" id="CHEBI:85452"/>
        <dbReference type="ChEBI" id="CHEBI:189585"/>
    </reaction>
    <physiologicalReaction direction="left-to-right" evidence="1">
        <dbReference type="Rhea" id="RHEA:70472"/>
    </physiologicalReaction>
</comment>
<comment type="catalytic activity">
    <reaction evidence="1">
        <text>a 1,N(2)-etheno-2'-deoxyguanosine in double-stranded DNA + 2-oxoglutarate + O2 + H2O = a 2'-deoxyguanosine in double-stranded DNA + glyoxal + succinate + CO2</text>
        <dbReference type="Rhea" id="RHEA:70487"/>
        <dbReference type="Rhea" id="RHEA-COMP:17910"/>
        <dbReference type="Rhea" id="RHEA-COMP:17912"/>
        <dbReference type="ChEBI" id="CHEBI:15377"/>
        <dbReference type="ChEBI" id="CHEBI:15379"/>
        <dbReference type="ChEBI" id="CHEBI:16526"/>
        <dbReference type="ChEBI" id="CHEBI:16810"/>
        <dbReference type="ChEBI" id="CHEBI:30031"/>
        <dbReference type="ChEBI" id="CHEBI:34779"/>
        <dbReference type="ChEBI" id="CHEBI:85445"/>
        <dbReference type="ChEBI" id="CHEBI:189586"/>
    </reaction>
    <physiologicalReaction direction="left-to-right" evidence="1">
        <dbReference type="Rhea" id="RHEA:70488"/>
    </physiologicalReaction>
</comment>
<comment type="cofactor">
    <cofactor evidence="1 2">
        <name>Fe(2+)</name>
        <dbReference type="ChEBI" id="CHEBI:29033"/>
    </cofactor>
    <text evidence="1">Binds 1 Fe(2+) ion per subunit.</text>
</comment>
<comment type="activity regulation">
    <text evidence="5">Activated by magnesium ions.</text>
</comment>
<comment type="subunit">
    <text evidence="1">Interacts with PCNA homotrimer; this interaction is enhanced during the S-phase of the cell cycle. Interacts with nucleolar proteins NCL, UBTF and NPM1. Interacts with XRCC5-XRCC6 heterodimer.</text>
</comment>
<comment type="subcellular location">
    <subcellularLocation>
        <location evidence="5 6">Nucleus</location>
    </subcellularLocation>
    <subcellularLocation>
        <location evidence="1">Nucleus</location>
        <location evidence="1">Nucleolus</location>
    </subcellularLocation>
    <subcellularLocation>
        <location evidence="1">Nucleus</location>
        <location evidence="1">Nucleoplasm</location>
    </subcellularLocation>
    <text evidence="1">Relocates to the replication foci during S-phase.</text>
</comment>
<comment type="tissue specificity">
    <text evidence="4 5 6">Detected in liver, testis and kidney (at protein level). Detected in heart and testis.</text>
</comment>
<comment type="domain">
    <text evidence="1">The PCNA-binding motif (AlkB homolog 2 PCNA-interacting motif, APIM), mediates the colocalization of ALKBH2 with PCNA at the replication foci, coordinating the repair of alkylated DNA damage with DNA replication.</text>
</comment>
<comment type="disruption phenotype">
    <text evidence="5 6">No visible phenotype, and no effect on the level of 1-ethenoadenine in genomic DNA in aging mice. In contrast, the levels of 1-methyladenine in genomic DNA increase over time in aging adults.</text>
</comment>
<comment type="similarity">
    <text evidence="7">Belongs to the alkB family.</text>
</comment>
<sequence length="239" mass="27129">MDKFLVRPDLRDLQGGGEEPAPTGGASGDLKSPDWRHLRAEGLSCDYTVLFGKAEADKIFRELEQEVEYFTGALAKVQVFGKWHSVPRKQATYGDAGLTYTFSGLTLTPKPWVPVLERVRDRVCEVTGQTFNFVLVNRYKDGCDHIGEHRDDERELAPGSPIASVSFGACRDFIFRHKDSRGKRPRRTVEVVRLQLAHGSLLMMNPPTNTHWYHSLPIRKRVLAPRVNLTFRKILPTKK</sequence>
<keyword id="KW-0223">Dioxygenase</keyword>
<keyword id="KW-0227">DNA damage</keyword>
<keyword id="KW-0234">DNA repair</keyword>
<keyword id="KW-0408">Iron</keyword>
<keyword id="KW-0460">Magnesium</keyword>
<keyword id="KW-0479">Metal-binding</keyword>
<keyword id="KW-0539">Nucleus</keyword>
<keyword id="KW-0560">Oxidoreductase</keyword>
<keyword id="KW-1185">Reference proteome</keyword>
<proteinExistence type="evidence at protein level"/>
<reference key="1">
    <citation type="journal article" date="2005" name="Science">
        <title>The transcriptional landscape of the mammalian genome.</title>
        <authorList>
            <person name="Carninci P."/>
            <person name="Kasukawa T."/>
            <person name="Katayama S."/>
            <person name="Gough J."/>
            <person name="Frith M.C."/>
            <person name="Maeda N."/>
            <person name="Oyama R."/>
            <person name="Ravasi T."/>
            <person name="Lenhard B."/>
            <person name="Wells C."/>
            <person name="Kodzius R."/>
            <person name="Shimokawa K."/>
            <person name="Bajic V.B."/>
            <person name="Brenner S.E."/>
            <person name="Batalov S."/>
            <person name="Forrest A.R."/>
            <person name="Zavolan M."/>
            <person name="Davis M.J."/>
            <person name="Wilming L.G."/>
            <person name="Aidinis V."/>
            <person name="Allen J.E."/>
            <person name="Ambesi-Impiombato A."/>
            <person name="Apweiler R."/>
            <person name="Aturaliya R.N."/>
            <person name="Bailey T.L."/>
            <person name="Bansal M."/>
            <person name="Baxter L."/>
            <person name="Beisel K.W."/>
            <person name="Bersano T."/>
            <person name="Bono H."/>
            <person name="Chalk A.M."/>
            <person name="Chiu K.P."/>
            <person name="Choudhary V."/>
            <person name="Christoffels A."/>
            <person name="Clutterbuck D.R."/>
            <person name="Crowe M.L."/>
            <person name="Dalla E."/>
            <person name="Dalrymple B.P."/>
            <person name="de Bono B."/>
            <person name="Della Gatta G."/>
            <person name="di Bernardo D."/>
            <person name="Down T."/>
            <person name="Engstrom P."/>
            <person name="Fagiolini M."/>
            <person name="Faulkner G."/>
            <person name="Fletcher C.F."/>
            <person name="Fukushima T."/>
            <person name="Furuno M."/>
            <person name="Futaki S."/>
            <person name="Gariboldi M."/>
            <person name="Georgii-Hemming P."/>
            <person name="Gingeras T.R."/>
            <person name="Gojobori T."/>
            <person name="Green R.E."/>
            <person name="Gustincich S."/>
            <person name="Harbers M."/>
            <person name="Hayashi Y."/>
            <person name="Hensch T.K."/>
            <person name="Hirokawa N."/>
            <person name="Hill D."/>
            <person name="Huminiecki L."/>
            <person name="Iacono M."/>
            <person name="Ikeo K."/>
            <person name="Iwama A."/>
            <person name="Ishikawa T."/>
            <person name="Jakt M."/>
            <person name="Kanapin A."/>
            <person name="Katoh M."/>
            <person name="Kawasawa Y."/>
            <person name="Kelso J."/>
            <person name="Kitamura H."/>
            <person name="Kitano H."/>
            <person name="Kollias G."/>
            <person name="Krishnan S.P."/>
            <person name="Kruger A."/>
            <person name="Kummerfeld S.K."/>
            <person name="Kurochkin I.V."/>
            <person name="Lareau L.F."/>
            <person name="Lazarevic D."/>
            <person name="Lipovich L."/>
            <person name="Liu J."/>
            <person name="Liuni S."/>
            <person name="McWilliam S."/>
            <person name="Madan Babu M."/>
            <person name="Madera M."/>
            <person name="Marchionni L."/>
            <person name="Matsuda H."/>
            <person name="Matsuzawa S."/>
            <person name="Miki H."/>
            <person name="Mignone F."/>
            <person name="Miyake S."/>
            <person name="Morris K."/>
            <person name="Mottagui-Tabar S."/>
            <person name="Mulder N."/>
            <person name="Nakano N."/>
            <person name="Nakauchi H."/>
            <person name="Ng P."/>
            <person name="Nilsson R."/>
            <person name="Nishiguchi S."/>
            <person name="Nishikawa S."/>
            <person name="Nori F."/>
            <person name="Ohara O."/>
            <person name="Okazaki Y."/>
            <person name="Orlando V."/>
            <person name="Pang K.C."/>
            <person name="Pavan W.J."/>
            <person name="Pavesi G."/>
            <person name="Pesole G."/>
            <person name="Petrovsky N."/>
            <person name="Piazza S."/>
            <person name="Reed J."/>
            <person name="Reid J.F."/>
            <person name="Ring B.Z."/>
            <person name="Ringwald M."/>
            <person name="Rost B."/>
            <person name="Ruan Y."/>
            <person name="Salzberg S.L."/>
            <person name="Sandelin A."/>
            <person name="Schneider C."/>
            <person name="Schoenbach C."/>
            <person name="Sekiguchi K."/>
            <person name="Semple C.A."/>
            <person name="Seno S."/>
            <person name="Sessa L."/>
            <person name="Sheng Y."/>
            <person name="Shibata Y."/>
            <person name="Shimada H."/>
            <person name="Shimada K."/>
            <person name="Silva D."/>
            <person name="Sinclair B."/>
            <person name="Sperling S."/>
            <person name="Stupka E."/>
            <person name="Sugiura K."/>
            <person name="Sultana R."/>
            <person name="Takenaka Y."/>
            <person name="Taki K."/>
            <person name="Tammoja K."/>
            <person name="Tan S.L."/>
            <person name="Tang S."/>
            <person name="Taylor M.S."/>
            <person name="Tegner J."/>
            <person name="Teichmann S.A."/>
            <person name="Ueda H.R."/>
            <person name="van Nimwegen E."/>
            <person name="Verardo R."/>
            <person name="Wei C.L."/>
            <person name="Yagi K."/>
            <person name="Yamanishi H."/>
            <person name="Zabarovsky E."/>
            <person name="Zhu S."/>
            <person name="Zimmer A."/>
            <person name="Hide W."/>
            <person name="Bult C."/>
            <person name="Grimmond S.M."/>
            <person name="Teasdale R.D."/>
            <person name="Liu E.T."/>
            <person name="Brusic V."/>
            <person name="Quackenbush J."/>
            <person name="Wahlestedt C."/>
            <person name="Mattick J.S."/>
            <person name="Hume D.A."/>
            <person name="Kai C."/>
            <person name="Sasaki D."/>
            <person name="Tomaru Y."/>
            <person name="Fukuda S."/>
            <person name="Kanamori-Katayama M."/>
            <person name="Suzuki M."/>
            <person name="Aoki J."/>
            <person name="Arakawa T."/>
            <person name="Iida J."/>
            <person name="Imamura K."/>
            <person name="Itoh M."/>
            <person name="Kato T."/>
            <person name="Kawaji H."/>
            <person name="Kawagashira N."/>
            <person name="Kawashima T."/>
            <person name="Kojima M."/>
            <person name="Kondo S."/>
            <person name="Konno H."/>
            <person name="Nakano K."/>
            <person name="Ninomiya N."/>
            <person name="Nishio T."/>
            <person name="Okada M."/>
            <person name="Plessy C."/>
            <person name="Shibata K."/>
            <person name="Shiraki T."/>
            <person name="Suzuki S."/>
            <person name="Tagami M."/>
            <person name="Waki K."/>
            <person name="Watahiki A."/>
            <person name="Okamura-Oho Y."/>
            <person name="Suzuki H."/>
            <person name="Kawai J."/>
            <person name="Hayashizaki Y."/>
        </authorList>
    </citation>
    <scope>NUCLEOTIDE SEQUENCE [LARGE SCALE MRNA]</scope>
    <source>
        <strain>C57BL/6J</strain>
        <tissue>Urinary bladder</tissue>
    </source>
</reference>
<reference key="2">
    <citation type="journal article" date="2004" name="Genome Res.">
        <title>The status, quality, and expansion of the NIH full-length cDNA project: the Mammalian Gene Collection (MGC).</title>
        <authorList>
            <consortium name="The MGC Project Team"/>
        </authorList>
    </citation>
    <scope>NUCLEOTIDE SEQUENCE [LARGE SCALE MRNA]</scope>
    <source>
        <tissue>Jaw</tissue>
    </source>
</reference>
<reference key="3">
    <citation type="journal article" date="2005" name="J. Biol. Chem.">
        <title>Repair of methylation damage in DNA and RNA by mammalian AlkB homologues.</title>
        <authorList>
            <person name="Lee D.-H."/>
            <person name="Jin S.-G."/>
            <person name="Cai S."/>
            <person name="Chen Y."/>
            <person name="Pfeifer G.P."/>
            <person name="O'Connor T.R."/>
        </authorList>
    </citation>
    <scope>FUNCTION</scope>
    <scope>CATALYTIC ACTIVITY</scope>
    <scope>MUTAGENESIS OF ASP-151 AND HIS-214</scope>
    <scope>TISSUE SPECIFICITY</scope>
</reference>
<reference key="4">
    <citation type="journal article" date="2006" name="EMBO J.">
        <title>Repair deficient mice reveal mABH2 as the primary oxidative demethylase for repairing 1meA and 3meC lesions in DNA.</title>
        <authorList>
            <person name="Ringvoll J."/>
            <person name="Nordstrand L.M."/>
            <person name="Vaagboe C.B."/>
            <person name="Talstad V."/>
            <person name="Reite K."/>
            <person name="Aas P.A."/>
            <person name="Lauritzen K.H."/>
            <person name="Liabakk N.B."/>
            <person name="Bjoerk A."/>
            <person name="Doughty R.W."/>
            <person name="Falnes P.O."/>
            <person name="Krokan H.E."/>
            <person name="Klungland A."/>
        </authorList>
    </citation>
    <scope>DISRUPTION PHENOTYPE</scope>
    <scope>FUNCTION</scope>
    <scope>CATALYTIC ACTIVITY</scope>
    <scope>ACTIVITY REGULATION</scope>
    <scope>SUBCELLULAR LOCATION</scope>
    <scope>TISSUE SPECIFICITY</scope>
</reference>
<reference key="5">
    <citation type="journal article" date="2008" name="Cancer Res.">
        <title>AlkB homologue 2-mediated repair of ethenoadenine lesions in mammalian DNA.</title>
        <authorList>
            <person name="Ringvoll J."/>
            <person name="Moen M.N."/>
            <person name="Nordstrand L.M."/>
            <person name="Meira L.B."/>
            <person name="Pang B."/>
            <person name="Bekkelund A."/>
            <person name="Dedon P.C."/>
            <person name="Bjelland S."/>
            <person name="Samson L.D."/>
            <person name="Falnes P.O."/>
            <person name="Klungland A."/>
        </authorList>
    </citation>
    <scope>DISRUPTION PHENOTYPE</scope>
    <scope>FUNCTION</scope>
    <scope>CATALYTIC ACTIVITY</scope>
    <scope>SUBCELLULAR LOCATION</scope>
    <scope>TISSUE SPECIFICITY</scope>
</reference>